<sequence length="1413" mass="152675">MAPMLSIASRSPSPALIAPHASARATGLRAPFAGNRIVGWGWGDQTKSGTDRNRASICVVLFLRVRSGEPTQAPRDPPAAVGGGGCYVRLPAPPRDRDAVLYHVCLFTLLLCFIPITALAESDIKNLFALRKAIAVGKGFLHNWFELETPPCNWSGISCVGLTVVAIDLSSTPLYVDFPSQIIAFQSLVRLNVSGCGFSGELPEAMVNLQHLQHLDLSDNQLGGPLPASLFDLKMLKVMVLDNNMFSGQLSPAIAHLQQLTVLSISTNSFSGGLPPELGSLKNLEYLDIHTNAFSGSIPASFSNLSRLLYLDANNNNLTGSIFPGIRALVNLVKLDLSSNGLVGAIPKELCQLKNLQSLILSDNELTGSIPEEIGNLKQLEVLNLLKCNLMDTVPLSIGNLEILEGLYISFNSFSGELPASVGELRNLRQLMAKSAGFTGSIPKELGNCKKLTTLVLSGNNFTGTIPEELADLVAVVLFDVEGNRLSGHIPDWIQNWSNVSSISLAQNMFDGPLPGLPLHLVSFSAESNRLSGSIPAKICQGTFLQILRLNDNNLTGSIDETFKGCKNLTELSLLDNHLHGEIPEYLALLPLVSLDLSHNNFTGMIPDRLWESSTILDISLSDNQLTGMITESIGKLLSLQSLSIDRNYLQGPLPRSIGALRNLTALSLSGNMLSEDIPIQLFNCRNLVTLDLSCNNLTGHIPKAISHLTKLNTLVLSRNRLSGAIPSELCVAFSRESHSELEYVQHIGLIDLSRNRLTGHIPRAINNCSILVELHLQDNLLSGTIPVELAELRNITTIDLSSNALVGPVLPWPVPLASLQGLLLSNNRLSGSIPSGIGNILPQITMLDLSGNALTGTLPLDLLCKESLNHLDVSDNNISGQIPFSCHEDKESPIPLIFFNASSNHFSGSLDESISNFTKLTYLDLHNNSLTGRLPSAIARVTSLYYLDLSSNDFSGTIPCGICGMFGLTFANFSGNRDGGTFTLADCAAEEGGVCAANRVDRKMPDHPFHVLEATICCIATAIVIVLVVILVVYLRRRRKMLRRRQFVLVPAGDNAMADHETTLSNNLLGRRRMKKREPPSINLATFEHAPVRVTVDEIMRATGNFDGMHVVGDGGFGTVYRAELPGGRRVAVKRLHGVGRRFQGGEREFRAEMETVGKVRHPNLVPLLGYCAAGDERFLVYEYMEHGSLEDRLRGGGGAALGWPERLTICGGAARGLAFLHHGFVPHVIHRDVKSSNVLLGEGLQPRVSDFGLARIISACETHVSTVLAGTLGYIPPEYALAMRCTAKGDVYSFGVVMLELLTGRPPTWSSAEVTAEGDDERGGGGSLVGWVRWMAARGRGGEVFDACLPVSGAEREQMARVLDVARDCTADEPWRRPTMAEVARRVGAIEAMEYGPLVVAVSSGEPPAMP</sequence>
<keyword id="KW-0067">ATP-binding</keyword>
<keyword id="KW-1003">Cell membrane</keyword>
<keyword id="KW-0325">Glycoprotein</keyword>
<keyword id="KW-0418">Kinase</keyword>
<keyword id="KW-0433">Leucine-rich repeat</keyword>
<keyword id="KW-0472">Membrane</keyword>
<keyword id="KW-0547">Nucleotide-binding</keyword>
<keyword id="KW-0675">Receptor</keyword>
<keyword id="KW-1185">Reference proteome</keyword>
<keyword id="KW-0677">Repeat</keyword>
<keyword id="KW-0723">Serine/threonine-protein kinase</keyword>
<keyword id="KW-0732">Signal</keyword>
<keyword id="KW-0808">Transferase</keyword>
<keyword id="KW-0812">Transmembrane</keyword>
<keyword id="KW-1133">Transmembrane helix</keyword>
<protein>
    <recommendedName>
        <fullName evidence="7">Leucine-rich repeat receptor protein kinase MSL1</fullName>
        <ecNumber evidence="2">2.7.11.1</ecNumber>
    </recommendedName>
    <alternativeName>
        <fullName evidence="7">MSP1 protein homolog 1</fullName>
    </alternativeName>
    <alternativeName>
        <fullName evidence="6">MSP1-like protein 1</fullName>
    </alternativeName>
</protein>
<reference key="1">
    <citation type="journal article" date="2005" name="Nature">
        <title>The map-based sequence of the rice genome.</title>
        <authorList>
            <consortium name="International rice genome sequencing project (IRGSP)"/>
        </authorList>
    </citation>
    <scope>NUCLEOTIDE SEQUENCE [LARGE SCALE GENOMIC DNA]</scope>
    <source>
        <strain>cv. Nipponbare</strain>
    </source>
</reference>
<reference key="2">
    <citation type="journal article" date="2008" name="Nucleic Acids Res.">
        <title>The rice annotation project database (RAP-DB): 2008 update.</title>
        <authorList>
            <consortium name="The rice annotation project (RAP)"/>
        </authorList>
    </citation>
    <scope>GENOME REANNOTATION</scope>
    <source>
        <strain>cv. Nipponbare</strain>
    </source>
</reference>
<reference key="3">
    <citation type="journal article" date="2013" name="Rice">
        <title>Improvement of the Oryza sativa Nipponbare reference genome using next generation sequence and optical map data.</title>
        <authorList>
            <person name="Kawahara Y."/>
            <person name="de la Bastide M."/>
            <person name="Hamilton J.P."/>
            <person name="Kanamori H."/>
            <person name="McCombie W.R."/>
            <person name="Ouyang S."/>
            <person name="Schwartz D.C."/>
            <person name="Tanaka T."/>
            <person name="Wu J."/>
            <person name="Zhou S."/>
            <person name="Childs K.L."/>
            <person name="Davidson R.M."/>
            <person name="Lin H."/>
            <person name="Quesada-Ocampo L."/>
            <person name="Vaillancourt B."/>
            <person name="Sakai H."/>
            <person name="Lee S.S."/>
            <person name="Kim J."/>
            <person name="Numa H."/>
            <person name="Itoh T."/>
            <person name="Buell C.R."/>
            <person name="Matsumoto T."/>
        </authorList>
    </citation>
    <scope>GENOME REANNOTATION</scope>
    <source>
        <strain>cv. Nipponbare</strain>
    </source>
</reference>
<reference key="4">
    <citation type="journal article" date="2005" name="PLoS Biol.">
        <title>The genomes of Oryza sativa: a history of duplications.</title>
        <authorList>
            <person name="Yu J."/>
            <person name="Wang J."/>
            <person name="Lin W."/>
            <person name="Li S."/>
            <person name="Li H."/>
            <person name="Zhou J."/>
            <person name="Ni P."/>
            <person name="Dong W."/>
            <person name="Hu S."/>
            <person name="Zeng C."/>
            <person name="Zhang J."/>
            <person name="Zhang Y."/>
            <person name="Li R."/>
            <person name="Xu Z."/>
            <person name="Li S."/>
            <person name="Li X."/>
            <person name="Zheng H."/>
            <person name="Cong L."/>
            <person name="Lin L."/>
            <person name="Yin J."/>
            <person name="Geng J."/>
            <person name="Li G."/>
            <person name="Shi J."/>
            <person name="Liu J."/>
            <person name="Lv H."/>
            <person name="Li J."/>
            <person name="Wang J."/>
            <person name="Deng Y."/>
            <person name="Ran L."/>
            <person name="Shi X."/>
            <person name="Wang X."/>
            <person name="Wu Q."/>
            <person name="Li C."/>
            <person name="Ren X."/>
            <person name="Wang J."/>
            <person name="Wang X."/>
            <person name="Li D."/>
            <person name="Liu D."/>
            <person name="Zhang X."/>
            <person name="Ji Z."/>
            <person name="Zhao W."/>
            <person name="Sun Y."/>
            <person name="Zhang Z."/>
            <person name="Bao J."/>
            <person name="Han Y."/>
            <person name="Dong L."/>
            <person name="Ji J."/>
            <person name="Chen P."/>
            <person name="Wu S."/>
            <person name="Liu J."/>
            <person name="Xiao Y."/>
            <person name="Bu D."/>
            <person name="Tan J."/>
            <person name="Yang L."/>
            <person name="Ye C."/>
            <person name="Zhang J."/>
            <person name="Xu J."/>
            <person name="Zhou Y."/>
            <person name="Yu Y."/>
            <person name="Zhang B."/>
            <person name="Zhuang S."/>
            <person name="Wei H."/>
            <person name="Liu B."/>
            <person name="Lei M."/>
            <person name="Yu H."/>
            <person name="Li Y."/>
            <person name="Xu H."/>
            <person name="Wei S."/>
            <person name="He X."/>
            <person name="Fang L."/>
            <person name="Zhang Z."/>
            <person name="Zhang Y."/>
            <person name="Huang X."/>
            <person name="Su Z."/>
            <person name="Tong W."/>
            <person name="Li J."/>
            <person name="Tong Z."/>
            <person name="Li S."/>
            <person name="Ye J."/>
            <person name="Wang L."/>
            <person name="Fang L."/>
            <person name="Lei T."/>
            <person name="Chen C.-S."/>
            <person name="Chen H.-C."/>
            <person name="Xu Z."/>
            <person name="Li H."/>
            <person name="Huang H."/>
            <person name="Zhang F."/>
            <person name="Xu H."/>
            <person name="Li N."/>
            <person name="Zhao C."/>
            <person name="Li S."/>
            <person name="Dong L."/>
            <person name="Huang Y."/>
            <person name="Li L."/>
            <person name="Xi Y."/>
            <person name="Qi Q."/>
            <person name="Li W."/>
            <person name="Zhang B."/>
            <person name="Hu W."/>
            <person name="Zhang Y."/>
            <person name="Tian X."/>
            <person name="Jiao Y."/>
            <person name="Liang X."/>
            <person name="Jin J."/>
            <person name="Gao L."/>
            <person name="Zheng W."/>
            <person name="Hao B."/>
            <person name="Liu S.-M."/>
            <person name="Wang W."/>
            <person name="Yuan L."/>
            <person name="Cao M."/>
            <person name="McDermott J."/>
            <person name="Samudrala R."/>
            <person name="Wang J."/>
            <person name="Wong G.K.-S."/>
            <person name="Yang H."/>
        </authorList>
    </citation>
    <scope>NUCLEOTIDE SEQUENCE [LARGE SCALE GENOMIC DNA]</scope>
    <source>
        <strain>cv. Nipponbare</strain>
    </source>
</reference>
<reference key="5">
    <citation type="journal article" date="2003" name="Science">
        <title>Collection, mapping, and annotation of over 28,000 cDNA clones from japonica rice.</title>
        <authorList>
            <consortium name="The rice full-length cDNA consortium"/>
        </authorList>
    </citation>
    <scope>NUCLEOTIDE SEQUENCE [LARGE SCALE MRNA] OF 952-1413</scope>
    <source>
        <strain>cv. Nipponbare</strain>
    </source>
</reference>
<reference key="6">
    <citation type="journal article" date="2008" name="Plant J.">
        <title>OsTDL1A binds to the LRR domain of rice receptor kinase MSP1, and is required to limit sporocyte numbers.</title>
        <authorList>
            <person name="Zhao X."/>
            <person name="de Palma J."/>
            <person name="Oane R."/>
            <person name="Gamuyao R."/>
            <person name="Luo M."/>
            <person name="Chaudhury A."/>
            <person name="Herve P."/>
            <person name="Xue Q."/>
            <person name="Bennett J."/>
        </authorList>
    </citation>
    <scope>TISSUE SPECIFICITY</scope>
</reference>
<dbReference type="EC" id="2.7.11.1" evidence="2"/>
<dbReference type="EMBL" id="AP000366">
    <property type="protein sequence ID" value="BAD15407.1"/>
    <property type="molecule type" value="Genomic_DNA"/>
</dbReference>
<dbReference type="EMBL" id="AP008208">
    <property type="protein sequence ID" value="BAF08092.1"/>
    <property type="status" value="ALT_SEQ"/>
    <property type="molecule type" value="Genomic_DNA"/>
</dbReference>
<dbReference type="EMBL" id="AP014958">
    <property type="status" value="NOT_ANNOTATED_CDS"/>
    <property type="molecule type" value="Genomic_DNA"/>
</dbReference>
<dbReference type="EMBL" id="CM000139">
    <property type="protein sequence ID" value="EAZ22074.1"/>
    <property type="molecule type" value="Genomic_DNA"/>
</dbReference>
<dbReference type="EMBL" id="AK110011">
    <property type="status" value="NOT_ANNOTATED_CDS"/>
    <property type="molecule type" value="mRNA"/>
</dbReference>
<dbReference type="SMR" id="Q7F8Q9"/>
<dbReference type="STRING" id="39947.Q7F8Q9"/>
<dbReference type="GlyCosmos" id="Q7F8Q9">
    <property type="glycosylation" value="19 sites, No reported glycans"/>
</dbReference>
<dbReference type="PaxDb" id="39947-Q7F8Q9"/>
<dbReference type="EnsemblPlants" id="Os02t0194400-02">
    <property type="protein sequence ID" value="Os02t0194400-02"/>
    <property type="gene ID" value="Os02g0194400"/>
</dbReference>
<dbReference type="Gramene" id="Os02t0194400-02">
    <property type="protein sequence ID" value="Os02t0194400-02"/>
    <property type="gene ID" value="Os02g0194400"/>
</dbReference>
<dbReference type="KEGG" id="dosa:Os02g0194400"/>
<dbReference type="eggNOG" id="ENOG502QRD1">
    <property type="taxonomic scope" value="Eukaryota"/>
</dbReference>
<dbReference type="HOGENOM" id="CLU_000288_21_4_1"/>
<dbReference type="InParanoid" id="Q7F8Q9"/>
<dbReference type="Proteomes" id="UP000000763">
    <property type="component" value="Chromosome 2"/>
</dbReference>
<dbReference type="Proteomes" id="UP000007752">
    <property type="component" value="Chromosome 2"/>
</dbReference>
<dbReference type="Proteomes" id="UP000059680">
    <property type="component" value="Chromosome 2"/>
</dbReference>
<dbReference type="ExpressionAtlas" id="Q7F8Q9">
    <property type="expression patterns" value="baseline and differential"/>
</dbReference>
<dbReference type="GO" id="GO:0016020">
    <property type="term" value="C:membrane"/>
    <property type="evidence" value="ECO:0000318"/>
    <property type="project" value="GO_Central"/>
</dbReference>
<dbReference type="GO" id="GO:0005886">
    <property type="term" value="C:plasma membrane"/>
    <property type="evidence" value="ECO:0007669"/>
    <property type="project" value="UniProtKB-SubCell"/>
</dbReference>
<dbReference type="GO" id="GO:0005524">
    <property type="term" value="F:ATP binding"/>
    <property type="evidence" value="ECO:0007669"/>
    <property type="project" value="UniProtKB-KW"/>
</dbReference>
<dbReference type="GO" id="GO:0106310">
    <property type="term" value="F:protein serine kinase activity"/>
    <property type="evidence" value="ECO:0007669"/>
    <property type="project" value="RHEA"/>
</dbReference>
<dbReference type="GO" id="GO:0004674">
    <property type="term" value="F:protein serine/threonine kinase activity"/>
    <property type="evidence" value="ECO:0000318"/>
    <property type="project" value="GO_Central"/>
</dbReference>
<dbReference type="CDD" id="cd14066">
    <property type="entry name" value="STKc_IRAK"/>
    <property type="match status" value="1"/>
</dbReference>
<dbReference type="FunFam" id="3.80.10.10:FF:001351">
    <property type="entry name" value="Leucine-rich repeat receptor protein kinase MSL1"/>
    <property type="match status" value="1"/>
</dbReference>
<dbReference type="FunFam" id="3.80.10.10:FF:000591">
    <property type="entry name" value="Leucine-rich repeat receptor protein kinase MSP1"/>
    <property type="match status" value="1"/>
</dbReference>
<dbReference type="FunFam" id="3.80.10.10:FF:000626">
    <property type="entry name" value="Leucine-rich repeat receptor protein kinase MSP1"/>
    <property type="match status" value="1"/>
</dbReference>
<dbReference type="FunFam" id="1.10.510.10:FF:000309">
    <property type="entry name" value="Leucine-rich repeat receptor-like protein kinase"/>
    <property type="match status" value="1"/>
</dbReference>
<dbReference type="FunFam" id="3.80.10.10:FF:000041">
    <property type="entry name" value="LRR receptor-like serine/threonine-protein kinase ERECTA"/>
    <property type="match status" value="1"/>
</dbReference>
<dbReference type="FunFam" id="3.80.10.10:FF:000095">
    <property type="entry name" value="LRR receptor-like serine/threonine-protein kinase GSO1"/>
    <property type="match status" value="1"/>
</dbReference>
<dbReference type="FunFam" id="3.30.200.20:FF:000745">
    <property type="entry name" value="Phytosulfokine receptor 2"/>
    <property type="match status" value="1"/>
</dbReference>
<dbReference type="FunFam" id="3.80.10.10:FF:001366">
    <property type="entry name" value="Receptor like protein 39"/>
    <property type="match status" value="1"/>
</dbReference>
<dbReference type="Gene3D" id="3.30.200.20">
    <property type="entry name" value="Phosphorylase Kinase, domain 1"/>
    <property type="match status" value="1"/>
</dbReference>
<dbReference type="Gene3D" id="3.80.10.10">
    <property type="entry name" value="Ribonuclease Inhibitor"/>
    <property type="match status" value="7"/>
</dbReference>
<dbReference type="Gene3D" id="1.10.510.10">
    <property type="entry name" value="Transferase(Phosphotransferase) domain 1"/>
    <property type="match status" value="1"/>
</dbReference>
<dbReference type="InterPro" id="IPR011009">
    <property type="entry name" value="Kinase-like_dom_sf"/>
</dbReference>
<dbReference type="InterPro" id="IPR001611">
    <property type="entry name" value="Leu-rich_rpt"/>
</dbReference>
<dbReference type="InterPro" id="IPR003591">
    <property type="entry name" value="Leu-rich_rpt_typical-subtyp"/>
</dbReference>
<dbReference type="InterPro" id="IPR032675">
    <property type="entry name" value="LRR_dom_sf"/>
</dbReference>
<dbReference type="InterPro" id="IPR013210">
    <property type="entry name" value="LRR_N_plant-typ"/>
</dbReference>
<dbReference type="InterPro" id="IPR055414">
    <property type="entry name" value="LRR_R13L4/SHOC2-like"/>
</dbReference>
<dbReference type="InterPro" id="IPR051716">
    <property type="entry name" value="Plant_RL_S/T_kinase"/>
</dbReference>
<dbReference type="InterPro" id="IPR000719">
    <property type="entry name" value="Prot_kinase_dom"/>
</dbReference>
<dbReference type="InterPro" id="IPR017441">
    <property type="entry name" value="Protein_kinase_ATP_BS"/>
</dbReference>
<dbReference type="InterPro" id="IPR008271">
    <property type="entry name" value="Ser/Thr_kinase_AS"/>
</dbReference>
<dbReference type="PANTHER" id="PTHR48053:SF154">
    <property type="entry name" value="(WILD MALAYSIAN BANANA) HYPOTHETICAL PROTEIN"/>
    <property type="match status" value="1"/>
</dbReference>
<dbReference type="PANTHER" id="PTHR48053">
    <property type="entry name" value="LEUCINE RICH REPEAT FAMILY PROTEIN, EXPRESSED"/>
    <property type="match status" value="1"/>
</dbReference>
<dbReference type="Pfam" id="PF00560">
    <property type="entry name" value="LRR_1"/>
    <property type="match status" value="11"/>
</dbReference>
<dbReference type="Pfam" id="PF23598">
    <property type="entry name" value="LRR_14"/>
    <property type="match status" value="1"/>
</dbReference>
<dbReference type="Pfam" id="PF13855">
    <property type="entry name" value="LRR_8"/>
    <property type="match status" value="2"/>
</dbReference>
<dbReference type="Pfam" id="PF08263">
    <property type="entry name" value="LRRNT_2"/>
    <property type="match status" value="1"/>
</dbReference>
<dbReference type="Pfam" id="PF00069">
    <property type="entry name" value="Pkinase"/>
    <property type="match status" value="1"/>
</dbReference>
<dbReference type="SMART" id="SM00369">
    <property type="entry name" value="LRR_TYP"/>
    <property type="match status" value="11"/>
</dbReference>
<dbReference type="SMART" id="SM00220">
    <property type="entry name" value="S_TKc"/>
    <property type="match status" value="1"/>
</dbReference>
<dbReference type="SUPFAM" id="SSF52058">
    <property type="entry name" value="L domain-like"/>
    <property type="match status" value="2"/>
</dbReference>
<dbReference type="SUPFAM" id="SSF56112">
    <property type="entry name" value="Protein kinase-like (PK-like)"/>
    <property type="match status" value="1"/>
</dbReference>
<dbReference type="SUPFAM" id="SSF52047">
    <property type="entry name" value="RNI-like"/>
    <property type="match status" value="1"/>
</dbReference>
<dbReference type="PROSITE" id="PS00107">
    <property type="entry name" value="PROTEIN_KINASE_ATP"/>
    <property type="match status" value="1"/>
</dbReference>
<dbReference type="PROSITE" id="PS50011">
    <property type="entry name" value="PROTEIN_KINASE_DOM"/>
    <property type="match status" value="1"/>
</dbReference>
<dbReference type="PROSITE" id="PS00108">
    <property type="entry name" value="PROTEIN_KINASE_ST"/>
    <property type="match status" value="1"/>
</dbReference>
<gene>
    <name evidence="6" type="primary">MSL1</name>
    <name evidence="9" type="ordered locus">Os02g0194400</name>
    <name evidence="7" type="ordered locus">LOC_Os02g10100</name>
    <name evidence="10" type="ORF">OsJ_05738</name>
    <name evidence="8" type="ORF">P0437H03.136</name>
</gene>
<proteinExistence type="evidence at transcript level"/>
<feature type="signal peptide" evidence="2">
    <location>
        <begin position="1"/>
        <end position="23"/>
    </location>
</feature>
<feature type="chain" id="PRO_0000432098" description="Leucine-rich repeat receptor protein kinase MSL1" evidence="2">
    <location>
        <begin position="24"/>
        <end position="1413"/>
    </location>
</feature>
<feature type="transmembrane region" description="Helical" evidence="2">
    <location>
        <begin position="1016"/>
        <end position="1036"/>
    </location>
</feature>
<feature type="repeat" description="LRR 1" evidence="2">
    <location>
        <begin position="185"/>
        <end position="209"/>
    </location>
</feature>
<feature type="repeat" description="LRR 2" evidence="2">
    <location>
        <begin position="210"/>
        <end position="233"/>
    </location>
</feature>
<feature type="repeat" description="LRR 3" evidence="2">
    <location>
        <begin position="235"/>
        <end position="257"/>
    </location>
</feature>
<feature type="repeat" description="LRR 4" evidence="2">
    <location>
        <begin position="258"/>
        <end position="281"/>
    </location>
</feature>
<feature type="repeat" description="LRR 5" evidence="2">
    <location>
        <begin position="282"/>
        <end position="304"/>
    </location>
</feature>
<feature type="repeat" description="LRR 6" evidence="2">
    <location>
        <begin position="306"/>
        <end position="329"/>
    </location>
</feature>
<feature type="repeat" description="LRR 7" evidence="2">
    <location>
        <begin position="330"/>
        <end position="353"/>
    </location>
</feature>
<feature type="repeat" description="LRR 8" evidence="2">
    <location>
        <begin position="354"/>
        <end position="377"/>
    </location>
</feature>
<feature type="repeat" description="LRR 9" evidence="2">
    <location>
        <begin position="379"/>
        <end position="401"/>
    </location>
</feature>
<feature type="repeat" description="LRR 10" evidence="2">
    <location>
        <begin position="402"/>
        <end position="425"/>
    </location>
</feature>
<feature type="repeat" description="LRR 11" evidence="2">
    <location>
        <begin position="427"/>
        <end position="449"/>
    </location>
</feature>
<feature type="repeat" description="LRR 12" evidence="2">
    <location>
        <begin position="450"/>
        <end position="473"/>
    </location>
</feature>
<feature type="repeat" description="LRR 13" evidence="2">
    <location>
        <begin position="475"/>
        <end position="497"/>
    </location>
</feature>
<feature type="repeat" description="LRR 14" evidence="2">
    <location>
        <begin position="498"/>
        <end position="518"/>
    </location>
</feature>
<feature type="repeat" description="LRR 15" evidence="2">
    <location>
        <begin position="519"/>
        <end position="542"/>
    </location>
</feature>
<feature type="repeat" description="LRR 16" evidence="2">
    <location>
        <begin position="543"/>
        <end position="565"/>
    </location>
</feature>
<feature type="repeat" description="LRR 17" evidence="2">
    <location>
        <begin position="567"/>
        <end position="589"/>
    </location>
</feature>
<feature type="repeat" description="LRR 18" evidence="2">
    <location>
        <begin position="590"/>
        <end position="613"/>
    </location>
</feature>
<feature type="repeat" description="LRR 19" evidence="2">
    <location>
        <begin position="615"/>
        <end position="636"/>
    </location>
</feature>
<feature type="repeat" description="LRR 20" evidence="2">
    <location>
        <begin position="637"/>
        <end position="661"/>
    </location>
</feature>
<feature type="repeat" description="LRR 21" evidence="2">
    <location>
        <begin position="662"/>
        <end position="685"/>
    </location>
</feature>
<feature type="repeat" description="LRR 22" evidence="2">
    <location>
        <begin position="687"/>
        <end position="709"/>
    </location>
</feature>
<feature type="repeat" description="LRR 23" evidence="2">
    <location>
        <begin position="710"/>
        <end position="733"/>
    </location>
</feature>
<feature type="repeat" description="LRR 24" evidence="2">
    <location>
        <begin position="745"/>
        <end position="769"/>
    </location>
</feature>
<feature type="repeat" description="LRR 25" evidence="2">
    <location>
        <begin position="771"/>
        <end position="793"/>
    </location>
</feature>
<feature type="repeat" description="LRR 26" evidence="2">
    <location>
        <begin position="794"/>
        <end position="817"/>
    </location>
</feature>
<feature type="repeat" description="LRR 27" evidence="2">
    <location>
        <begin position="818"/>
        <end position="841"/>
    </location>
</feature>
<feature type="repeat" description="LRR 28" evidence="2">
    <location>
        <begin position="843"/>
        <end position="866"/>
    </location>
</feature>
<feature type="repeat" description="LRR 29" evidence="2">
    <location>
        <begin position="868"/>
        <end position="890"/>
    </location>
</feature>
<feature type="repeat" description="LRR 30" evidence="2">
    <location>
        <begin position="918"/>
        <end position="942"/>
    </location>
</feature>
<feature type="repeat" description="LRR 31" evidence="2">
    <location>
        <begin position="944"/>
        <end position="966"/>
    </location>
</feature>
<feature type="domain" description="Protein kinase" evidence="3">
    <location>
        <begin position="1107"/>
        <end position="1401"/>
    </location>
</feature>
<feature type="active site" description="Proton acceptor" evidence="3">
    <location>
        <position position="1234"/>
    </location>
</feature>
<feature type="binding site" evidence="3">
    <location>
        <begin position="1113"/>
        <end position="1121"/>
    </location>
    <ligand>
        <name>ATP</name>
        <dbReference type="ChEBI" id="CHEBI:30616"/>
    </ligand>
</feature>
<feature type="binding site" evidence="3">
    <location>
        <position position="1135"/>
    </location>
    <ligand>
        <name>ATP</name>
        <dbReference type="ChEBI" id="CHEBI:30616"/>
    </ligand>
</feature>
<feature type="glycosylation site" description="N-linked (GlcNAc...) asparagine" evidence="4">
    <location>
        <position position="153"/>
    </location>
</feature>
<feature type="glycosylation site" description="N-linked (GlcNAc...) asparagine" evidence="4">
    <location>
        <position position="192"/>
    </location>
</feature>
<feature type="glycosylation site" description="N-linked (GlcNAc...) asparagine" evidence="4">
    <location>
        <position position="304"/>
    </location>
</feature>
<feature type="glycosylation site" description="N-linked (GlcNAc...) asparagine" evidence="4">
    <location>
        <position position="317"/>
    </location>
</feature>
<feature type="glycosylation site" description="N-linked (GlcNAc...) asparagine" evidence="4">
    <location>
        <position position="461"/>
    </location>
</feature>
<feature type="glycosylation site" description="N-linked (GlcNAc...) asparagine" evidence="4">
    <location>
        <position position="496"/>
    </location>
</feature>
<feature type="glycosylation site" description="N-linked (GlcNAc...) asparagine" evidence="4">
    <location>
        <position position="499"/>
    </location>
</feature>
<feature type="glycosylation site" description="N-linked (GlcNAc...) asparagine" evidence="4">
    <location>
        <position position="554"/>
    </location>
</feature>
<feature type="glycosylation site" description="N-linked (GlcNAc...) asparagine" evidence="4">
    <location>
        <position position="568"/>
    </location>
</feature>
<feature type="glycosylation site" description="N-linked (GlcNAc...) asparagine" evidence="4">
    <location>
        <position position="601"/>
    </location>
</feature>
<feature type="glycosylation site" description="N-linked (GlcNAc...) asparagine" evidence="4">
    <location>
        <position position="663"/>
    </location>
</feature>
<feature type="glycosylation site" description="N-linked (GlcNAc...) asparagine" evidence="4">
    <location>
        <position position="697"/>
    </location>
</feature>
<feature type="glycosylation site" description="N-linked (GlcNAc...) asparagine" evidence="4">
    <location>
        <position position="768"/>
    </location>
</feature>
<feature type="glycosylation site" description="N-linked (GlcNAc...) asparagine" evidence="4">
    <location>
        <position position="795"/>
    </location>
</feature>
<feature type="glycosylation site" description="N-linked (GlcNAc...) asparagine" evidence="4">
    <location>
        <position position="878"/>
    </location>
</feature>
<feature type="glycosylation site" description="N-linked (GlcNAc...) asparagine" evidence="4">
    <location>
        <position position="901"/>
    </location>
</feature>
<feature type="glycosylation site" description="N-linked (GlcNAc...) asparagine" evidence="4">
    <location>
        <position position="917"/>
    </location>
</feature>
<feature type="glycosylation site" description="N-linked (GlcNAc...) asparagine" evidence="4">
    <location>
        <position position="928"/>
    </location>
</feature>
<feature type="glycosylation site" description="N-linked (GlcNAc...) asparagine" evidence="4">
    <location>
        <position position="973"/>
    </location>
</feature>
<feature type="sequence conflict" description="In Ref. 5; AK110011." evidence="7" ref="5">
    <original>C</original>
    <variation>R</variation>
    <location>
        <position position="1262"/>
    </location>
</feature>
<accession>Q7F8Q9</accession>
<accession>Q0E346</accession>
<comment type="function">
    <text evidence="1">Receptor-like kinase that may play a role male and female sporogenesis.</text>
</comment>
<comment type="catalytic activity">
    <reaction evidence="2">
        <text>L-seryl-[protein] + ATP = O-phospho-L-seryl-[protein] + ADP + H(+)</text>
        <dbReference type="Rhea" id="RHEA:17989"/>
        <dbReference type="Rhea" id="RHEA-COMP:9863"/>
        <dbReference type="Rhea" id="RHEA-COMP:11604"/>
        <dbReference type="ChEBI" id="CHEBI:15378"/>
        <dbReference type="ChEBI" id="CHEBI:29999"/>
        <dbReference type="ChEBI" id="CHEBI:30616"/>
        <dbReference type="ChEBI" id="CHEBI:83421"/>
        <dbReference type="ChEBI" id="CHEBI:456216"/>
        <dbReference type="EC" id="2.7.11.1"/>
    </reaction>
</comment>
<comment type="catalytic activity">
    <reaction evidence="2">
        <text>L-threonyl-[protein] + ATP = O-phospho-L-threonyl-[protein] + ADP + H(+)</text>
        <dbReference type="Rhea" id="RHEA:46608"/>
        <dbReference type="Rhea" id="RHEA-COMP:11060"/>
        <dbReference type="Rhea" id="RHEA-COMP:11605"/>
        <dbReference type="ChEBI" id="CHEBI:15378"/>
        <dbReference type="ChEBI" id="CHEBI:30013"/>
        <dbReference type="ChEBI" id="CHEBI:30616"/>
        <dbReference type="ChEBI" id="CHEBI:61977"/>
        <dbReference type="ChEBI" id="CHEBI:456216"/>
        <dbReference type="EC" id="2.7.11.1"/>
    </reaction>
</comment>
<comment type="subcellular location">
    <subcellularLocation>
        <location evidence="7">Cell membrane</location>
        <topology evidence="2">Single-pass type I membrane protein</topology>
    </subcellularLocation>
</comment>
<comment type="tissue specificity">
    <text evidence="5">Expressed in roots, leaves, shoots and spikelets.</text>
</comment>
<comment type="similarity">
    <text evidence="3">Belongs to the protein kinase superfamily. Ser/Thr protein kinase family.</text>
</comment>
<comment type="sequence caution" evidence="7">
    <conflict type="erroneous gene model prediction">
        <sequence resource="EMBL-CDS" id="BAF08092"/>
    </conflict>
</comment>
<organism>
    <name type="scientific">Oryza sativa subsp. japonica</name>
    <name type="common">Rice</name>
    <dbReference type="NCBI Taxonomy" id="39947"/>
    <lineage>
        <taxon>Eukaryota</taxon>
        <taxon>Viridiplantae</taxon>
        <taxon>Streptophyta</taxon>
        <taxon>Embryophyta</taxon>
        <taxon>Tracheophyta</taxon>
        <taxon>Spermatophyta</taxon>
        <taxon>Magnoliopsida</taxon>
        <taxon>Liliopsida</taxon>
        <taxon>Poales</taxon>
        <taxon>Poaceae</taxon>
        <taxon>BOP clade</taxon>
        <taxon>Oryzoideae</taxon>
        <taxon>Oryzeae</taxon>
        <taxon>Oryzinae</taxon>
        <taxon>Oryza</taxon>
        <taxon>Oryza sativa</taxon>
    </lineage>
</organism>
<evidence type="ECO:0000250" key="1">
    <source>
        <dbReference type="UniProtKB" id="Q8RZV7"/>
    </source>
</evidence>
<evidence type="ECO:0000255" key="2"/>
<evidence type="ECO:0000255" key="3">
    <source>
        <dbReference type="PROSITE-ProRule" id="PRU00159"/>
    </source>
</evidence>
<evidence type="ECO:0000255" key="4">
    <source>
        <dbReference type="PROSITE-ProRule" id="PRU00498"/>
    </source>
</evidence>
<evidence type="ECO:0000269" key="5">
    <source>
    </source>
</evidence>
<evidence type="ECO:0000303" key="6">
    <source>
    </source>
</evidence>
<evidence type="ECO:0000305" key="7"/>
<evidence type="ECO:0000312" key="8">
    <source>
        <dbReference type="EMBL" id="BAD15407.1"/>
    </source>
</evidence>
<evidence type="ECO:0000312" key="9">
    <source>
        <dbReference type="EMBL" id="BAF08092.1"/>
    </source>
</evidence>
<evidence type="ECO:0000312" key="10">
    <source>
        <dbReference type="EMBL" id="EAZ22074.1"/>
    </source>
</evidence>
<name>MSL1_ORYSJ</name>